<organism>
    <name type="scientific">Mycoplasma pneumoniae (strain ATCC 29342 / M129 / Subtype 1)</name>
    <name type="common">Mycoplasmoides pneumoniae</name>
    <dbReference type="NCBI Taxonomy" id="272634"/>
    <lineage>
        <taxon>Bacteria</taxon>
        <taxon>Bacillati</taxon>
        <taxon>Mycoplasmatota</taxon>
        <taxon>Mycoplasmoidales</taxon>
        <taxon>Mycoplasmoidaceae</taxon>
        <taxon>Mycoplasmoides</taxon>
    </lineage>
</organism>
<comment type="function">
    <text evidence="1">Participates in various redox reactions through the reversible oxidation of its active center dithiol to a disulfide and catalyzes dithiol-disulfide exchange reactions.</text>
</comment>
<comment type="similarity">
    <text evidence="3">Belongs to the thioredoxin family.</text>
</comment>
<keyword id="KW-1015">Disulfide bond</keyword>
<keyword id="KW-0249">Electron transport</keyword>
<keyword id="KW-0676">Redox-active center</keyword>
<keyword id="KW-1185">Reference proteome</keyword>
<keyword id="KW-0813">Transport</keyword>
<protein>
    <recommendedName>
        <fullName>Thioredoxin</fullName>
        <shortName>Trx</shortName>
    </recommendedName>
</protein>
<accession>P75512</accession>
<proteinExistence type="inferred from homology"/>
<feature type="chain" id="PRO_0000120114" description="Thioredoxin">
    <location>
        <begin position="1"/>
        <end position="102"/>
    </location>
</feature>
<feature type="domain" description="Thioredoxin" evidence="2">
    <location>
        <begin position="2"/>
        <end position="102"/>
    </location>
</feature>
<feature type="disulfide bond" description="Redox-active" evidence="2">
    <location>
        <begin position="30"/>
        <end position="33"/>
    </location>
</feature>
<dbReference type="EMBL" id="U51987">
    <property type="protein sequence ID" value="AAC45450.1"/>
    <property type="molecule type" value="Genomic_DNA"/>
</dbReference>
<dbReference type="EMBL" id="U00089">
    <property type="protein sequence ID" value="AAB96218.1"/>
    <property type="molecule type" value="Genomic_DNA"/>
</dbReference>
<dbReference type="PIR" id="S73896">
    <property type="entry name" value="S73896"/>
</dbReference>
<dbReference type="RefSeq" id="NP_109951.1">
    <property type="nucleotide sequence ID" value="NC_000912.1"/>
</dbReference>
<dbReference type="RefSeq" id="WP_010874620.1">
    <property type="nucleotide sequence ID" value="NZ_OU342337.1"/>
</dbReference>
<dbReference type="SMR" id="P75512"/>
<dbReference type="IntAct" id="P75512">
    <property type="interactions" value="1"/>
</dbReference>
<dbReference type="STRING" id="272634.MPN_263"/>
<dbReference type="EnsemblBacteria" id="AAB96218">
    <property type="protein sequence ID" value="AAB96218"/>
    <property type="gene ID" value="MPN_263"/>
</dbReference>
<dbReference type="GeneID" id="66609091"/>
<dbReference type="KEGG" id="mpn:MPN_263"/>
<dbReference type="PATRIC" id="fig|272634.6.peg.282"/>
<dbReference type="HOGENOM" id="CLU_090389_14_0_14"/>
<dbReference type="OrthoDB" id="9790390at2"/>
<dbReference type="BioCyc" id="MPNE272634:G1GJ3-414-MONOMER"/>
<dbReference type="Proteomes" id="UP000000808">
    <property type="component" value="Chromosome"/>
</dbReference>
<dbReference type="GO" id="GO:0005737">
    <property type="term" value="C:cytoplasm"/>
    <property type="evidence" value="ECO:0007669"/>
    <property type="project" value="TreeGrafter"/>
</dbReference>
<dbReference type="GO" id="GO:0015035">
    <property type="term" value="F:protein-disulfide reductase activity"/>
    <property type="evidence" value="ECO:0007669"/>
    <property type="project" value="InterPro"/>
</dbReference>
<dbReference type="CDD" id="cd02947">
    <property type="entry name" value="TRX_family"/>
    <property type="match status" value="1"/>
</dbReference>
<dbReference type="Gene3D" id="3.40.30.10">
    <property type="entry name" value="Glutaredoxin"/>
    <property type="match status" value="1"/>
</dbReference>
<dbReference type="InterPro" id="IPR005746">
    <property type="entry name" value="Thioredoxin"/>
</dbReference>
<dbReference type="InterPro" id="IPR036249">
    <property type="entry name" value="Thioredoxin-like_sf"/>
</dbReference>
<dbReference type="InterPro" id="IPR017937">
    <property type="entry name" value="Thioredoxin_CS"/>
</dbReference>
<dbReference type="InterPro" id="IPR013766">
    <property type="entry name" value="Thioredoxin_domain"/>
</dbReference>
<dbReference type="NCBIfam" id="TIGR01068">
    <property type="entry name" value="thioredoxin"/>
    <property type="match status" value="1"/>
</dbReference>
<dbReference type="PANTHER" id="PTHR45663">
    <property type="entry name" value="GEO12009P1"/>
    <property type="match status" value="1"/>
</dbReference>
<dbReference type="PANTHER" id="PTHR45663:SF11">
    <property type="entry name" value="GEO12009P1"/>
    <property type="match status" value="1"/>
</dbReference>
<dbReference type="Pfam" id="PF00085">
    <property type="entry name" value="Thioredoxin"/>
    <property type="match status" value="1"/>
</dbReference>
<dbReference type="PIRSF" id="PIRSF000077">
    <property type="entry name" value="Thioredoxin"/>
    <property type="match status" value="1"/>
</dbReference>
<dbReference type="PRINTS" id="PR00421">
    <property type="entry name" value="THIOREDOXIN"/>
</dbReference>
<dbReference type="SUPFAM" id="SSF52833">
    <property type="entry name" value="Thioredoxin-like"/>
    <property type="match status" value="1"/>
</dbReference>
<dbReference type="PROSITE" id="PS00194">
    <property type="entry name" value="THIOREDOXIN_1"/>
    <property type="match status" value="1"/>
</dbReference>
<dbReference type="PROSITE" id="PS51352">
    <property type="entry name" value="THIOREDOXIN_2"/>
    <property type="match status" value="1"/>
</dbReference>
<reference key="1">
    <citation type="journal article" date="1997" name="Microbiology">
        <title>The thioredoxin reductase system of mycoplasmas.</title>
        <authorList>
            <person name="Ben-Menachem G."/>
            <person name="Himmelreich R."/>
            <person name="Herrmann R."/>
            <person name="Aharonowitz Y."/>
            <person name="Rottem S."/>
        </authorList>
    </citation>
    <scope>NUCLEOTIDE SEQUENCE [GENOMIC DNA]</scope>
    <source>
        <strain>ATCC 29342 / M129 / Subtype 1</strain>
    </source>
</reference>
<reference key="2">
    <citation type="journal article" date="1996" name="Nucleic Acids Res.">
        <title>Complete sequence analysis of the genome of the bacterium Mycoplasma pneumoniae.</title>
        <authorList>
            <person name="Himmelreich R."/>
            <person name="Hilbert H."/>
            <person name="Plagens H."/>
            <person name="Pirkl E."/>
            <person name="Li B.-C."/>
            <person name="Herrmann R."/>
        </authorList>
    </citation>
    <scope>NUCLEOTIDE SEQUENCE [LARGE SCALE GENOMIC DNA]</scope>
    <source>
        <strain>ATCC 29342 / M129 / Subtype 1</strain>
    </source>
</reference>
<evidence type="ECO:0000250" key="1"/>
<evidence type="ECO:0000255" key="2">
    <source>
        <dbReference type="PROSITE-ProRule" id="PRU00691"/>
    </source>
</evidence>
<evidence type="ECO:0000305" key="3"/>
<gene>
    <name type="primary">trxA</name>
    <name type="synonym">trx</name>
    <name type="ordered locus">MPN_263</name>
    <name type="ORF">MP570</name>
</gene>
<sequence length="102" mass="11215">MVTEIKSLKQLGELFASNNKVIIDFWAEWCGPCKITGPEFAKAASEVSTVAFAKVNVDEQTDIAAAYKITSLPTIVLFEKGQEKHRAIGFMPKAKIVQLVSQ</sequence>
<name>THIO_MYCPN</name>